<accession>A9KER3</accession>
<gene>
    <name evidence="1" type="primary">murG</name>
    <name type="ordered locus">CBUD_1972</name>
</gene>
<dbReference type="EC" id="2.4.1.227" evidence="1"/>
<dbReference type="EMBL" id="CP000733">
    <property type="protein sequence ID" value="ABS78378.1"/>
    <property type="molecule type" value="Genomic_DNA"/>
</dbReference>
<dbReference type="RefSeq" id="WP_011997355.1">
    <property type="nucleotide sequence ID" value="NC_009727.1"/>
</dbReference>
<dbReference type="SMR" id="A9KER3"/>
<dbReference type="CAZy" id="GT28">
    <property type="family name" value="Glycosyltransferase Family 28"/>
</dbReference>
<dbReference type="KEGG" id="cbd:CBUD_1972"/>
<dbReference type="HOGENOM" id="CLU_037404_2_0_6"/>
<dbReference type="UniPathway" id="UPA00219"/>
<dbReference type="Proteomes" id="UP000008555">
    <property type="component" value="Chromosome"/>
</dbReference>
<dbReference type="GO" id="GO:0005886">
    <property type="term" value="C:plasma membrane"/>
    <property type="evidence" value="ECO:0007669"/>
    <property type="project" value="UniProtKB-SubCell"/>
</dbReference>
<dbReference type="GO" id="GO:0051991">
    <property type="term" value="F:UDP-N-acetyl-D-glucosamine:N-acetylmuramoyl-L-alanyl-D-glutamyl-meso-2,6-diaminopimelyl-D-alanyl-D-alanine-diphosphoundecaprenol 4-beta-N-acetylglucosaminlytransferase activity"/>
    <property type="evidence" value="ECO:0007669"/>
    <property type="project" value="RHEA"/>
</dbReference>
<dbReference type="GO" id="GO:0050511">
    <property type="term" value="F:undecaprenyldiphospho-muramoylpentapeptide beta-N-acetylglucosaminyltransferase activity"/>
    <property type="evidence" value="ECO:0007669"/>
    <property type="project" value="UniProtKB-UniRule"/>
</dbReference>
<dbReference type="GO" id="GO:0005975">
    <property type="term" value="P:carbohydrate metabolic process"/>
    <property type="evidence" value="ECO:0007669"/>
    <property type="project" value="InterPro"/>
</dbReference>
<dbReference type="GO" id="GO:0051301">
    <property type="term" value="P:cell division"/>
    <property type="evidence" value="ECO:0007669"/>
    <property type="project" value="UniProtKB-KW"/>
</dbReference>
<dbReference type="GO" id="GO:0071555">
    <property type="term" value="P:cell wall organization"/>
    <property type="evidence" value="ECO:0007669"/>
    <property type="project" value="UniProtKB-KW"/>
</dbReference>
<dbReference type="GO" id="GO:0030259">
    <property type="term" value="P:lipid glycosylation"/>
    <property type="evidence" value="ECO:0007669"/>
    <property type="project" value="UniProtKB-UniRule"/>
</dbReference>
<dbReference type="GO" id="GO:0009252">
    <property type="term" value="P:peptidoglycan biosynthetic process"/>
    <property type="evidence" value="ECO:0007669"/>
    <property type="project" value="UniProtKB-UniRule"/>
</dbReference>
<dbReference type="GO" id="GO:0008360">
    <property type="term" value="P:regulation of cell shape"/>
    <property type="evidence" value="ECO:0007669"/>
    <property type="project" value="UniProtKB-KW"/>
</dbReference>
<dbReference type="CDD" id="cd03785">
    <property type="entry name" value="GT28_MurG"/>
    <property type="match status" value="1"/>
</dbReference>
<dbReference type="Gene3D" id="3.40.50.2000">
    <property type="entry name" value="Glycogen Phosphorylase B"/>
    <property type="match status" value="2"/>
</dbReference>
<dbReference type="HAMAP" id="MF_00033">
    <property type="entry name" value="MurG"/>
    <property type="match status" value="1"/>
</dbReference>
<dbReference type="InterPro" id="IPR006009">
    <property type="entry name" value="GlcNAc_MurG"/>
</dbReference>
<dbReference type="InterPro" id="IPR007235">
    <property type="entry name" value="Glyco_trans_28_C"/>
</dbReference>
<dbReference type="InterPro" id="IPR004276">
    <property type="entry name" value="GlycoTrans_28_N"/>
</dbReference>
<dbReference type="NCBIfam" id="TIGR01133">
    <property type="entry name" value="murG"/>
    <property type="match status" value="1"/>
</dbReference>
<dbReference type="PANTHER" id="PTHR21015:SF22">
    <property type="entry name" value="GLYCOSYLTRANSFERASE"/>
    <property type="match status" value="1"/>
</dbReference>
<dbReference type="PANTHER" id="PTHR21015">
    <property type="entry name" value="UDP-N-ACETYLGLUCOSAMINE--N-ACETYLMURAMYL-(PENTAPEPTIDE) PYROPHOSPHORYL-UNDECAPRENOL N-ACETYLGLUCOSAMINE TRANSFERASE 1"/>
    <property type="match status" value="1"/>
</dbReference>
<dbReference type="Pfam" id="PF04101">
    <property type="entry name" value="Glyco_tran_28_C"/>
    <property type="match status" value="1"/>
</dbReference>
<dbReference type="Pfam" id="PF03033">
    <property type="entry name" value="Glyco_transf_28"/>
    <property type="match status" value="1"/>
</dbReference>
<dbReference type="SUPFAM" id="SSF53756">
    <property type="entry name" value="UDP-Glycosyltransferase/glycogen phosphorylase"/>
    <property type="match status" value="1"/>
</dbReference>
<organism>
    <name type="scientific">Coxiella burnetii (strain Dugway 5J108-111)</name>
    <dbReference type="NCBI Taxonomy" id="434922"/>
    <lineage>
        <taxon>Bacteria</taxon>
        <taxon>Pseudomonadati</taxon>
        <taxon>Pseudomonadota</taxon>
        <taxon>Gammaproteobacteria</taxon>
        <taxon>Legionellales</taxon>
        <taxon>Coxiellaceae</taxon>
        <taxon>Coxiella</taxon>
    </lineage>
</organism>
<proteinExistence type="inferred from homology"/>
<protein>
    <recommendedName>
        <fullName evidence="1">UDP-N-acetylglucosamine--N-acetylmuramyl-(pentapeptide) pyrophosphoryl-undecaprenol N-acetylglucosamine transferase</fullName>
        <ecNumber evidence="1">2.4.1.227</ecNumber>
    </recommendedName>
    <alternativeName>
        <fullName evidence="1">Undecaprenyl-PP-MurNAc-pentapeptide-UDPGlcNAc GlcNAc transferase</fullName>
    </alternativeName>
</protein>
<sequence length="358" mass="39944">MNRILIIAGGTGGHIFPALAVARELREQEVDVQWLGVKGGLEEKLVPDSFPLHLIQIKAFRGKRGLQQLLMPLRLVRAVFQAYRIIRQFKPDVILGMGGYVAGPGGLAAWITRTPLIIHEQNSIPGLTNRVLAKMAKFILQGFPDTFPQNRKVITTGNPVRTELVKMPLPQVRLAARRGPLRILVLGGSQGARSINQKMLAALSSYPRSEEIAVWHQTGQRDFEFIQKEYEKIKIEAKVDNFISDMAGAYGWADLVVCRAGALTVCEIASVGVASIFIPYPHAVDNHQFHNARFLEQAGAAIIISEESLAETDLMRWFEQFAQDRDRLLTMAENARKLAKPEAVQRVIAQCKKFYAAR</sequence>
<feature type="chain" id="PRO_1000074454" description="UDP-N-acetylglucosamine--N-acetylmuramyl-(pentapeptide) pyrophosphoryl-undecaprenol N-acetylglucosamine transferase">
    <location>
        <begin position="1"/>
        <end position="358"/>
    </location>
</feature>
<feature type="binding site" evidence="1">
    <location>
        <begin position="11"/>
        <end position="13"/>
    </location>
    <ligand>
        <name>UDP-N-acetyl-alpha-D-glucosamine</name>
        <dbReference type="ChEBI" id="CHEBI:57705"/>
    </ligand>
</feature>
<feature type="binding site" evidence="1">
    <location>
        <position position="122"/>
    </location>
    <ligand>
        <name>UDP-N-acetyl-alpha-D-glucosamine</name>
        <dbReference type="ChEBI" id="CHEBI:57705"/>
    </ligand>
</feature>
<feature type="binding site" evidence="1">
    <location>
        <position position="161"/>
    </location>
    <ligand>
        <name>UDP-N-acetyl-alpha-D-glucosamine</name>
        <dbReference type="ChEBI" id="CHEBI:57705"/>
    </ligand>
</feature>
<feature type="binding site" evidence="1">
    <location>
        <position position="189"/>
    </location>
    <ligand>
        <name>UDP-N-acetyl-alpha-D-glucosamine</name>
        <dbReference type="ChEBI" id="CHEBI:57705"/>
    </ligand>
</feature>
<feature type="binding site" evidence="1">
    <location>
        <position position="243"/>
    </location>
    <ligand>
        <name>UDP-N-acetyl-alpha-D-glucosamine</name>
        <dbReference type="ChEBI" id="CHEBI:57705"/>
    </ligand>
</feature>
<feature type="binding site" evidence="1">
    <location>
        <begin position="262"/>
        <end position="267"/>
    </location>
    <ligand>
        <name>UDP-N-acetyl-alpha-D-glucosamine</name>
        <dbReference type="ChEBI" id="CHEBI:57705"/>
    </ligand>
</feature>
<feature type="binding site" evidence="1">
    <location>
        <position position="288"/>
    </location>
    <ligand>
        <name>UDP-N-acetyl-alpha-D-glucosamine</name>
        <dbReference type="ChEBI" id="CHEBI:57705"/>
    </ligand>
</feature>
<name>MURG_COXBN</name>
<comment type="function">
    <text evidence="1">Cell wall formation. Catalyzes the transfer of a GlcNAc subunit on undecaprenyl-pyrophosphoryl-MurNAc-pentapeptide (lipid intermediate I) to form undecaprenyl-pyrophosphoryl-MurNAc-(pentapeptide)GlcNAc (lipid intermediate II).</text>
</comment>
<comment type="catalytic activity">
    <reaction evidence="1">
        <text>di-trans,octa-cis-undecaprenyl diphospho-N-acetyl-alpha-D-muramoyl-L-alanyl-D-glutamyl-meso-2,6-diaminopimeloyl-D-alanyl-D-alanine + UDP-N-acetyl-alpha-D-glucosamine = di-trans,octa-cis-undecaprenyl diphospho-[N-acetyl-alpha-D-glucosaminyl-(1-&gt;4)]-N-acetyl-alpha-D-muramoyl-L-alanyl-D-glutamyl-meso-2,6-diaminopimeloyl-D-alanyl-D-alanine + UDP + H(+)</text>
        <dbReference type="Rhea" id="RHEA:31227"/>
        <dbReference type="ChEBI" id="CHEBI:15378"/>
        <dbReference type="ChEBI" id="CHEBI:57705"/>
        <dbReference type="ChEBI" id="CHEBI:58223"/>
        <dbReference type="ChEBI" id="CHEBI:61387"/>
        <dbReference type="ChEBI" id="CHEBI:61388"/>
        <dbReference type="EC" id="2.4.1.227"/>
    </reaction>
</comment>
<comment type="pathway">
    <text evidence="1">Cell wall biogenesis; peptidoglycan biosynthesis.</text>
</comment>
<comment type="subcellular location">
    <subcellularLocation>
        <location evidence="1">Cell inner membrane</location>
        <topology evidence="1">Peripheral membrane protein</topology>
        <orientation evidence="1">Cytoplasmic side</orientation>
    </subcellularLocation>
</comment>
<comment type="similarity">
    <text evidence="1">Belongs to the glycosyltransferase 28 family. MurG subfamily.</text>
</comment>
<keyword id="KW-0131">Cell cycle</keyword>
<keyword id="KW-0132">Cell division</keyword>
<keyword id="KW-0997">Cell inner membrane</keyword>
<keyword id="KW-1003">Cell membrane</keyword>
<keyword id="KW-0133">Cell shape</keyword>
<keyword id="KW-0961">Cell wall biogenesis/degradation</keyword>
<keyword id="KW-0328">Glycosyltransferase</keyword>
<keyword id="KW-0472">Membrane</keyword>
<keyword id="KW-0573">Peptidoglycan synthesis</keyword>
<keyword id="KW-0808">Transferase</keyword>
<reference key="1">
    <citation type="journal article" date="2009" name="Infect. Immun.">
        <title>Comparative genomics reveal extensive transposon-mediated genomic plasticity and diversity among potential effector proteins within the genus Coxiella.</title>
        <authorList>
            <person name="Beare P.A."/>
            <person name="Unsworth N."/>
            <person name="Andoh M."/>
            <person name="Voth D.E."/>
            <person name="Omsland A."/>
            <person name="Gilk S.D."/>
            <person name="Williams K.P."/>
            <person name="Sobral B.W."/>
            <person name="Kupko J.J. III"/>
            <person name="Porcella S.F."/>
            <person name="Samuel J.E."/>
            <person name="Heinzen R.A."/>
        </authorList>
    </citation>
    <scope>NUCLEOTIDE SEQUENCE [LARGE SCALE GENOMIC DNA]</scope>
    <source>
        <strain>Dugway 5J108-111</strain>
    </source>
</reference>
<evidence type="ECO:0000255" key="1">
    <source>
        <dbReference type="HAMAP-Rule" id="MF_00033"/>
    </source>
</evidence>